<sequence length="356" mass="39943">MAKENVCIVYGGKSAEHDVSILTAQNVLNAIDKEQYQIDIIYITNDGAWKKKENIVDTINDIDSLRLIDVEAGEISKLLSQGSTGNAYSAVFPLLHGPNGEDGTIQGLFEVLDIPYVGNGVLAASSSMDKLVMKQLFAHRGLPQLPYVSFLRSEYHKYEGNILKLVHDKLEYPVFVKPANLGSSVGISKCNNEEELKNGIEEAFQFDRKLVIEQGIEAREIEVAVLGNDYPETTWPGEVIKEVAFYDYKAKYKDGKIKLDIPADLDEEVQMTLRNMAVEAFKATDCAGLLRADFFVTDDNQIFINETNAMPGFTAFSMYPSLWENMGVSYSDLIKKLIELAKEKHEDKKQNKYKID</sequence>
<gene>
    <name evidence="2" type="primary">ddl</name>
    <name type="ordered locus">SSP0800</name>
</gene>
<evidence type="ECO:0000250" key="1"/>
<evidence type="ECO:0000255" key="2">
    <source>
        <dbReference type="HAMAP-Rule" id="MF_00047"/>
    </source>
</evidence>
<protein>
    <recommendedName>
        <fullName evidence="2">D-alanine--D-alanine ligase</fullName>
        <ecNumber evidence="2">6.3.2.4</ecNumber>
    </recommendedName>
    <alternativeName>
        <fullName evidence="2">D-Ala-D-Ala ligase</fullName>
    </alternativeName>
    <alternativeName>
        <fullName evidence="2">D-alanylalanine synthetase</fullName>
    </alternativeName>
</protein>
<accession>Q49Z31</accession>
<comment type="function">
    <text evidence="2">Cell wall formation.</text>
</comment>
<comment type="catalytic activity">
    <reaction evidence="2">
        <text>2 D-alanine + ATP = D-alanyl-D-alanine + ADP + phosphate + H(+)</text>
        <dbReference type="Rhea" id="RHEA:11224"/>
        <dbReference type="ChEBI" id="CHEBI:15378"/>
        <dbReference type="ChEBI" id="CHEBI:30616"/>
        <dbReference type="ChEBI" id="CHEBI:43474"/>
        <dbReference type="ChEBI" id="CHEBI:57416"/>
        <dbReference type="ChEBI" id="CHEBI:57822"/>
        <dbReference type="ChEBI" id="CHEBI:456216"/>
        <dbReference type="EC" id="6.3.2.4"/>
    </reaction>
</comment>
<comment type="cofactor">
    <cofactor evidence="1">
        <name>Mg(2+)</name>
        <dbReference type="ChEBI" id="CHEBI:18420"/>
    </cofactor>
    <cofactor evidence="1">
        <name>Mn(2+)</name>
        <dbReference type="ChEBI" id="CHEBI:29035"/>
    </cofactor>
    <text evidence="1">Binds 2 magnesium or manganese ions per subunit.</text>
</comment>
<comment type="pathway">
    <text evidence="2">Cell wall biogenesis; peptidoglycan biosynthesis.</text>
</comment>
<comment type="subcellular location">
    <subcellularLocation>
        <location evidence="2">Cytoplasm</location>
    </subcellularLocation>
</comment>
<comment type="similarity">
    <text evidence="2">Belongs to the D-alanine--D-alanine ligase family.</text>
</comment>
<dbReference type="EC" id="6.3.2.4" evidence="2"/>
<dbReference type="EMBL" id="AP008934">
    <property type="protein sequence ID" value="BAE17945.1"/>
    <property type="molecule type" value="Genomic_DNA"/>
</dbReference>
<dbReference type="RefSeq" id="WP_011302695.1">
    <property type="nucleotide sequence ID" value="NZ_MTGA01000032.1"/>
</dbReference>
<dbReference type="SMR" id="Q49Z31"/>
<dbReference type="GeneID" id="3615767"/>
<dbReference type="KEGG" id="ssp:SSP0800"/>
<dbReference type="PATRIC" id="fig|342451.11.peg.802"/>
<dbReference type="eggNOG" id="COG1181">
    <property type="taxonomic scope" value="Bacteria"/>
</dbReference>
<dbReference type="HOGENOM" id="CLU_039268_0_0_9"/>
<dbReference type="OrthoDB" id="9813261at2"/>
<dbReference type="UniPathway" id="UPA00219"/>
<dbReference type="Proteomes" id="UP000006371">
    <property type="component" value="Chromosome"/>
</dbReference>
<dbReference type="GO" id="GO:0005829">
    <property type="term" value="C:cytosol"/>
    <property type="evidence" value="ECO:0007669"/>
    <property type="project" value="TreeGrafter"/>
</dbReference>
<dbReference type="GO" id="GO:0005524">
    <property type="term" value="F:ATP binding"/>
    <property type="evidence" value="ECO:0007669"/>
    <property type="project" value="UniProtKB-KW"/>
</dbReference>
<dbReference type="GO" id="GO:0008716">
    <property type="term" value="F:D-alanine-D-alanine ligase activity"/>
    <property type="evidence" value="ECO:0007669"/>
    <property type="project" value="UniProtKB-UniRule"/>
</dbReference>
<dbReference type="GO" id="GO:0046872">
    <property type="term" value="F:metal ion binding"/>
    <property type="evidence" value="ECO:0007669"/>
    <property type="project" value="UniProtKB-KW"/>
</dbReference>
<dbReference type="GO" id="GO:0071555">
    <property type="term" value="P:cell wall organization"/>
    <property type="evidence" value="ECO:0007669"/>
    <property type="project" value="UniProtKB-KW"/>
</dbReference>
<dbReference type="GO" id="GO:0009252">
    <property type="term" value="P:peptidoglycan biosynthetic process"/>
    <property type="evidence" value="ECO:0007669"/>
    <property type="project" value="UniProtKB-UniRule"/>
</dbReference>
<dbReference type="GO" id="GO:0008360">
    <property type="term" value="P:regulation of cell shape"/>
    <property type="evidence" value="ECO:0007669"/>
    <property type="project" value="UniProtKB-KW"/>
</dbReference>
<dbReference type="FunFam" id="3.30.1490.20:FF:000007">
    <property type="entry name" value="D-alanine--D-alanine ligase"/>
    <property type="match status" value="1"/>
</dbReference>
<dbReference type="FunFam" id="3.30.470.20:FF:000008">
    <property type="entry name" value="D-alanine--D-alanine ligase"/>
    <property type="match status" value="1"/>
</dbReference>
<dbReference type="Gene3D" id="3.40.50.20">
    <property type="match status" value="1"/>
</dbReference>
<dbReference type="Gene3D" id="3.30.1490.20">
    <property type="entry name" value="ATP-grasp fold, A domain"/>
    <property type="match status" value="1"/>
</dbReference>
<dbReference type="Gene3D" id="3.30.470.20">
    <property type="entry name" value="ATP-grasp fold, B domain"/>
    <property type="match status" value="1"/>
</dbReference>
<dbReference type="HAMAP" id="MF_00047">
    <property type="entry name" value="Dala_Dala_lig"/>
    <property type="match status" value="1"/>
</dbReference>
<dbReference type="InterPro" id="IPR011761">
    <property type="entry name" value="ATP-grasp"/>
</dbReference>
<dbReference type="InterPro" id="IPR013815">
    <property type="entry name" value="ATP_grasp_subdomain_1"/>
</dbReference>
<dbReference type="InterPro" id="IPR000291">
    <property type="entry name" value="D-Ala_lig_Van_CS"/>
</dbReference>
<dbReference type="InterPro" id="IPR005905">
    <property type="entry name" value="D_ala_D_ala"/>
</dbReference>
<dbReference type="InterPro" id="IPR011095">
    <property type="entry name" value="Dala_Dala_lig_C"/>
</dbReference>
<dbReference type="InterPro" id="IPR011127">
    <property type="entry name" value="Dala_Dala_lig_N"/>
</dbReference>
<dbReference type="InterPro" id="IPR016185">
    <property type="entry name" value="PreATP-grasp_dom_sf"/>
</dbReference>
<dbReference type="NCBIfam" id="TIGR01205">
    <property type="entry name" value="D_ala_D_alaTIGR"/>
    <property type="match status" value="1"/>
</dbReference>
<dbReference type="NCBIfam" id="NF002526">
    <property type="entry name" value="PRK01966.1-2"/>
    <property type="match status" value="1"/>
</dbReference>
<dbReference type="NCBIfam" id="NF002528">
    <property type="entry name" value="PRK01966.1-4"/>
    <property type="match status" value="1"/>
</dbReference>
<dbReference type="PANTHER" id="PTHR23132">
    <property type="entry name" value="D-ALANINE--D-ALANINE LIGASE"/>
    <property type="match status" value="1"/>
</dbReference>
<dbReference type="PANTHER" id="PTHR23132:SF25">
    <property type="entry name" value="D-ALANINE--D-ALANINE LIGASE A"/>
    <property type="match status" value="1"/>
</dbReference>
<dbReference type="Pfam" id="PF07478">
    <property type="entry name" value="Dala_Dala_lig_C"/>
    <property type="match status" value="1"/>
</dbReference>
<dbReference type="Pfam" id="PF01820">
    <property type="entry name" value="Dala_Dala_lig_N"/>
    <property type="match status" value="1"/>
</dbReference>
<dbReference type="PIRSF" id="PIRSF039102">
    <property type="entry name" value="Ddl/VanB"/>
    <property type="match status" value="1"/>
</dbReference>
<dbReference type="SUPFAM" id="SSF56059">
    <property type="entry name" value="Glutathione synthetase ATP-binding domain-like"/>
    <property type="match status" value="1"/>
</dbReference>
<dbReference type="SUPFAM" id="SSF52440">
    <property type="entry name" value="PreATP-grasp domain"/>
    <property type="match status" value="1"/>
</dbReference>
<dbReference type="PROSITE" id="PS50975">
    <property type="entry name" value="ATP_GRASP"/>
    <property type="match status" value="1"/>
</dbReference>
<dbReference type="PROSITE" id="PS00843">
    <property type="entry name" value="DALA_DALA_LIGASE_1"/>
    <property type="match status" value="1"/>
</dbReference>
<organism>
    <name type="scientific">Staphylococcus saprophyticus subsp. saprophyticus (strain ATCC 15305 / DSM 20229 / NCIMB 8711 / NCTC 7292 / S-41)</name>
    <dbReference type="NCBI Taxonomy" id="342451"/>
    <lineage>
        <taxon>Bacteria</taxon>
        <taxon>Bacillati</taxon>
        <taxon>Bacillota</taxon>
        <taxon>Bacilli</taxon>
        <taxon>Bacillales</taxon>
        <taxon>Staphylococcaceae</taxon>
        <taxon>Staphylococcus</taxon>
    </lineage>
</organism>
<feature type="chain" id="PRO_1000030497" description="D-alanine--D-alanine ligase">
    <location>
        <begin position="1"/>
        <end position="356"/>
    </location>
</feature>
<feature type="domain" description="ATP-grasp" evidence="2">
    <location>
        <begin position="134"/>
        <end position="339"/>
    </location>
</feature>
<feature type="binding site" evidence="2">
    <location>
        <begin position="167"/>
        <end position="222"/>
    </location>
    <ligand>
        <name>ATP</name>
        <dbReference type="ChEBI" id="CHEBI:30616"/>
    </ligand>
</feature>
<feature type="binding site" evidence="2">
    <location>
        <position position="293"/>
    </location>
    <ligand>
        <name>Mg(2+)</name>
        <dbReference type="ChEBI" id="CHEBI:18420"/>
        <label>1</label>
    </ligand>
</feature>
<feature type="binding site" evidence="2">
    <location>
        <position position="306"/>
    </location>
    <ligand>
        <name>Mg(2+)</name>
        <dbReference type="ChEBI" id="CHEBI:18420"/>
        <label>1</label>
    </ligand>
</feature>
<feature type="binding site" evidence="2">
    <location>
        <position position="306"/>
    </location>
    <ligand>
        <name>Mg(2+)</name>
        <dbReference type="ChEBI" id="CHEBI:18420"/>
        <label>2</label>
    </ligand>
</feature>
<feature type="binding site" evidence="2">
    <location>
        <position position="308"/>
    </location>
    <ligand>
        <name>Mg(2+)</name>
        <dbReference type="ChEBI" id="CHEBI:18420"/>
        <label>2</label>
    </ligand>
</feature>
<keyword id="KW-0067">ATP-binding</keyword>
<keyword id="KW-0133">Cell shape</keyword>
<keyword id="KW-0961">Cell wall biogenesis/degradation</keyword>
<keyword id="KW-0963">Cytoplasm</keyword>
<keyword id="KW-0436">Ligase</keyword>
<keyword id="KW-0460">Magnesium</keyword>
<keyword id="KW-0464">Manganese</keyword>
<keyword id="KW-0479">Metal-binding</keyword>
<keyword id="KW-0547">Nucleotide-binding</keyword>
<keyword id="KW-0573">Peptidoglycan synthesis</keyword>
<keyword id="KW-1185">Reference proteome</keyword>
<reference key="1">
    <citation type="journal article" date="2005" name="Proc. Natl. Acad. Sci. U.S.A.">
        <title>Whole genome sequence of Staphylococcus saprophyticus reveals the pathogenesis of uncomplicated urinary tract infection.</title>
        <authorList>
            <person name="Kuroda M."/>
            <person name="Yamashita A."/>
            <person name="Hirakawa H."/>
            <person name="Kumano M."/>
            <person name="Morikawa K."/>
            <person name="Higashide M."/>
            <person name="Maruyama A."/>
            <person name="Inose Y."/>
            <person name="Matoba K."/>
            <person name="Toh H."/>
            <person name="Kuhara S."/>
            <person name="Hattori M."/>
            <person name="Ohta T."/>
        </authorList>
    </citation>
    <scope>NUCLEOTIDE SEQUENCE [LARGE SCALE GENOMIC DNA]</scope>
    <source>
        <strain>ATCC 15305 / DSM 20229 / NCIMB 8711 / NCTC 7292 / S-41</strain>
    </source>
</reference>
<name>DDL_STAS1</name>
<proteinExistence type="inferred from homology"/>